<sequence>MSPVSVISLPSDLCLPTSFIDRSGRELIPLHITIPNVAMRRQGKLMTRASMSMNLRTAVSDDAVIRRRGDFHSNLWDDDLIQSLSSPYGEPSYRERAERLIGEVKNSFNSMSNEDGESITPLDDLIQRLWMVDSVERLGIDRHFKKEIKSALDHVYRYWSEKGIGCGRESVVTDLNSTALGLRTLRLHGYDVSADVLNHFKNQSGQFACTLKQTEDQIRTVLNLYRASLIAFPGEKVMDEAESFSAKYLKEALQKIPVSSFSREIGDVLEYGWHTYLPRLEARNYIDVFGQDTENSKSYMKTEKLLELAKLEFNIFHALQKRELEYLVRWWKGSGSPQMTFCRHRHVEYYTLASCIAFEPQHSGFRLGFAKACHIITVLDDMYDTFGTLDELELFTSAIKRWDPSATECLPEYMKGVYMIVYNTVNEMSQEADKAQGRDTLNYCRQAWEEYIDAYMQEAKWIASGEVPTFEEYYENGKVSSGHRVSALQPILTTDIPFPEHVLKEVDIPSQLNDLASAILRLRGDTRCYQADRARGEEASCISCYMKDNPGTTEEDALNHLNAMISDVIKGLNWELLKPNSSVPISAKKHAFDISRAFHCGYKYRDGYSVANIETKSLVKRTVIDPVTL</sequence>
<protein>
    <recommendedName>
        <fullName>(-)-alpha-pinene synthase, chloroplastic</fullName>
        <ecNumber>4.2.3.119</ecNumber>
    </recommendedName>
    <alternativeName>
        <fullName>(+)-(3S:5S)-alpha-pinene synthase</fullName>
    </alternativeName>
    <alternativeName>
        <fullName>Synthase I</fullName>
    </alternativeName>
</protein>
<feature type="transit peptide" description="Chloroplast" evidence="2">
    <location>
        <begin position="1"/>
        <end position="48"/>
    </location>
</feature>
<feature type="chain" id="PRO_0000419232" description="(-)-alpha-pinene synthase, chloroplastic">
    <location>
        <begin position="49"/>
        <end position="629"/>
    </location>
</feature>
<feature type="short sequence motif" description="DDXXD motif">
    <location>
        <begin position="380"/>
        <end position="384"/>
    </location>
</feature>
<feature type="binding site" evidence="1">
    <location>
        <position position="380"/>
    </location>
    <ligand>
        <name>Mg(2+)</name>
        <dbReference type="ChEBI" id="CHEBI:18420"/>
        <label>1</label>
    </ligand>
</feature>
<feature type="binding site" evidence="1">
    <location>
        <position position="380"/>
    </location>
    <ligand>
        <name>Mg(2+)</name>
        <dbReference type="ChEBI" id="CHEBI:18420"/>
        <label>2</label>
    </ligand>
</feature>
<feature type="binding site" evidence="1">
    <location>
        <position position="384"/>
    </location>
    <ligand>
        <name>Mg(2+)</name>
        <dbReference type="ChEBI" id="CHEBI:18420"/>
        <label>1</label>
    </ligand>
</feature>
<feature type="binding site" evidence="1">
    <location>
        <position position="384"/>
    </location>
    <ligand>
        <name>Mg(2+)</name>
        <dbReference type="ChEBI" id="CHEBI:18420"/>
        <label>2</label>
    </ligand>
</feature>
<feature type="binding site" evidence="1">
    <location>
        <position position="532"/>
    </location>
    <ligand>
        <name>Mg(2+)</name>
        <dbReference type="ChEBI" id="CHEBI:18420"/>
        <label>3</label>
    </ligand>
</feature>
<feature type="binding site" evidence="1">
    <location>
        <position position="540"/>
    </location>
    <ligand>
        <name>K(+)</name>
        <dbReference type="ChEBI" id="CHEBI:29103"/>
    </ligand>
</feature>
<gene>
    <name type="primary">PT1</name>
</gene>
<comment type="function">
    <text evidence="3">Involved in defensive oleoresin formation in conifers in response to insect attack or other injury. Involved in monoterpene (C10) olefins biosynthesis. Produces mainly (-)-alpha-pinene (79%) and lesser amounts of (-)-beta-pinene (4.2%), nearly racemic mixtures of camphene (2.8% (+)/2.2% (-)) and limonene (2.4% (+)/3.7% (-)), as well as small amounts of (+)-alpha-pinene (3.3%) and (+)-beta-pinene (2.4%).</text>
</comment>
<comment type="catalytic activity">
    <reaction evidence="3">
        <text>(2E)-geranyl diphosphate = (1S,5S)-alpha-pinene + diphosphate</text>
        <dbReference type="Rhea" id="RHEA:25488"/>
        <dbReference type="ChEBI" id="CHEBI:28660"/>
        <dbReference type="ChEBI" id="CHEBI:33019"/>
        <dbReference type="ChEBI" id="CHEBI:58057"/>
        <dbReference type="EC" id="4.2.3.119"/>
    </reaction>
</comment>
<comment type="cofactor">
    <cofactor evidence="5">
        <name>Mg(2+)</name>
        <dbReference type="ChEBI" id="CHEBI:18420"/>
    </cofactor>
    <cofactor evidence="5">
        <name>Mn(2+)</name>
        <dbReference type="ChEBI" id="CHEBI:29035"/>
    </cofactor>
    <text evidence="5">Binds 3 Mg(2+) or Mn(2+) ions per subunit.</text>
</comment>
<comment type="cofactor">
    <cofactor evidence="3">
        <name>K(+)</name>
        <dbReference type="ChEBI" id="CHEBI:29103"/>
    </cofactor>
</comment>
<comment type="biophysicochemical properties">
    <kinetics>
        <KM evidence="3">1.4 uM for geranyl-diphosphate</KM>
    </kinetics>
    <phDependence>
        <text evidence="3">Optimum pH is 7.0.</text>
    </phDependence>
</comment>
<comment type="pathway">
    <text>Terpene metabolism; oleoresin biosynthesis.</text>
</comment>
<comment type="subcellular location">
    <subcellularLocation>
        <location evidence="4">Plastid</location>
        <location evidence="4">Chloroplast</location>
    </subcellularLocation>
</comment>
<comment type="domain">
    <text>The Asp-Asp-Xaa-Xaa-Asp/Glu (DDXXD/E) motif is important for the catalytic activity, presumably through binding to Mg(2+).</text>
</comment>
<comment type="similarity">
    <text evidence="4">Belongs to the terpene synthase family. Tpsd subfamily.</text>
</comment>
<name>PT1_PINTA</name>
<dbReference type="EC" id="4.2.3.119"/>
<dbReference type="EMBL" id="AF543527">
    <property type="protein sequence ID" value="AAO61225.1"/>
    <property type="molecule type" value="mRNA"/>
</dbReference>
<dbReference type="SMR" id="Q84KL6"/>
<dbReference type="KEGG" id="ag:AAO61225"/>
<dbReference type="BRENDA" id="4.2.3.119">
    <property type="organism ID" value="4861"/>
</dbReference>
<dbReference type="UniPathway" id="UPA00924"/>
<dbReference type="GO" id="GO:0009507">
    <property type="term" value="C:chloroplast"/>
    <property type="evidence" value="ECO:0007669"/>
    <property type="project" value="UniProtKB-SubCell"/>
</dbReference>
<dbReference type="GO" id="GO:0000287">
    <property type="term" value="F:magnesium ion binding"/>
    <property type="evidence" value="ECO:0000314"/>
    <property type="project" value="UniProtKB"/>
</dbReference>
<dbReference type="GO" id="GO:0046872">
    <property type="term" value="F:metal ion binding"/>
    <property type="evidence" value="ECO:0000314"/>
    <property type="project" value="UniProtKB"/>
</dbReference>
<dbReference type="GO" id="GO:0050550">
    <property type="term" value="F:pinene synthase activity"/>
    <property type="evidence" value="ECO:0000314"/>
    <property type="project" value="UniProtKB"/>
</dbReference>
<dbReference type="GO" id="GO:0030955">
    <property type="term" value="F:potassium ion binding"/>
    <property type="evidence" value="ECO:0000314"/>
    <property type="project" value="UniProtKB"/>
</dbReference>
<dbReference type="GO" id="GO:0046248">
    <property type="term" value="P:alpha-pinene biosynthetic process"/>
    <property type="evidence" value="ECO:0000314"/>
    <property type="project" value="UniProtKB"/>
</dbReference>
<dbReference type="GO" id="GO:0016102">
    <property type="term" value="P:diterpenoid biosynthetic process"/>
    <property type="evidence" value="ECO:0007669"/>
    <property type="project" value="InterPro"/>
</dbReference>
<dbReference type="GO" id="GO:0033383">
    <property type="term" value="P:geranyl diphosphate metabolic process"/>
    <property type="evidence" value="ECO:0000314"/>
    <property type="project" value="UniProtKB"/>
</dbReference>
<dbReference type="CDD" id="cd00684">
    <property type="entry name" value="Terpene_cyclase_plant_C1"/>
    <property type="match status" value="1"/>
</dbReference>
<dbReference type="FunFam" id="1.50.10.130:FF:000004">
    <property type="entry name" value="Carene synthase, chloroplastic"/>
    <property type="match status" value="1"/>
</dbReference>
<dbReference type="FunFam" id="1.10.600.10:FF:000005">
    <property type="entry name" value="Ent-kaur-16-ene synthase, chloroplastic"/>
    <property type="match status" value="1"/>
</dbReference>
<dbReference type="Gene3D" id="1.10.600.10">
    <property type="entry name" value="Farnesyl Diphosphate Synthase"/>
    <property type="match status" value="1"/>
</dbReference>
<dbReference type="Gene3D" id="1.50.10.130">
    <property type="entry name" value="Terpene synthase, N-terminal domain"/>
    <property type="match status" value="1"/>
</dbReference>
<dbReference type="InterPro" id="IPR008949">
    <property type="entry name" value="Isoprenoid_synthase_dom_sf"/>
</dbReference>
<dbReference type="InterPro" id="IPR034741">
    <property type="entry name" value="Terpene_cyclase-like_1_C"/>
</dbReference>
<dbReference type="InterPro" id="IPR044814">
    <property type="entry name" value="Terpene_cyclase_plant_C1"/>
</dbReference>
<dbReference type="InterPro" id="IPR001906">
    <property type="entry name" value="Terpene_synth_N"/>
</dbReference>
<dbReference type="InterPro" id="IPR036965">
    <property type="entry name" value="Terpene_synth_N_sf"/>
</dbReference>
<dbReference type="InterPro" id="IPR050148">
    <property type="entry name" value="Terpene_synthase-like"/>
</dbReference>
<dbReference type="InterPro" id="IPR005630">
    <property type="entry name" value="Terpene_synthase_metal-bd"/>
</dbReference>
<dbReference type="InterPro" id="IPR008930">
    <property type="entry name" value="Terpenoid_cyclase/PrenylTrfase"/>
</dbReference>
<dbReference type="PANTHER" id="PTHR31739:SF25">
    <property type="entry name" value="(E,E)-GERANYLLINALOOL SYNTHASE"/>
    <property type="match status" value="1"/>
</dbReference>
<dbReference type="PANTHER" id="PTHR31739">
    <property type="entry name" value="ENT-COPALYL DIPHOSPHATE SYNTHASE, CHLOROPLASTIC"/>
    <property type="match status" value="1"/>
</dbReference>
<dbReference type="Pfam" id="PF01397">
    <property type="entry name" value="Terpene_synth"/>
    <property type="match status" value="1"/>
</dbReference>
<dbReference type="Pfam" id="PF03936">
    <property type="entry name" value="Terpene_synth_C"/>
    <property type="match status" value="1"/>
</dbReference>
<dbReference type="SFLD" id="SFLDS00005">
    <property type="entry name" value="Isoprenoid_Synthase_Type_I"/>
    <property type="match status" value="1"/>
</dbReference>
<dbReference type="SFLD" id="SFLDG01019">
    <property type="entry name" value="Terpene_Cyclase_Like_1_C_Termi"/>
    <property type="match status" value="1"/>
</dbReference>
<dbReference type="SFLD" id="SFLDG01014">
    <property type="entry name" value="Terpene_Cyclase_Like_1_N-term"/>
    <property type="match status" value="1"/>
</dbReference>
<dbReference type="SUPFAM" id="SSF48239">
    <property type="entry name" value="Terpenoid cyclases/Protein prenyltransferases"/>
    <property type="match status" value="1"/>
</dbReference>
<dbReference type="SUPFAM" id="SSF48576">
    <property type="entry name" value="Terpenoid synthases"/>
    <property type="match status" value="1"/>
</dbReference>
<keyword id="KW-0150">Chloroplast</keyword>
<keyword id="KW-0456">Lyase</keyword>
<keyword id="KW-0460">Magnesium</keyword>
<keyword id="KW-0464">Manganese</keyword>
<keyword id="KW-0479">Metal-binding</keyword>
<keyword id="KW-0934">Plastid</keyword>
<keyword id="KW-0630">Potassium</keyword>
<keyword id="KW-0809">Transit peptide</keyword>
<evidence type="ECO:0000250" key="1"/>
<evidence type="ECO:0000255" key="2"/>
<evidence type="ECO:0000269" key="3">
    <source>
    </source>
</evidence>
<evidence type="ECO:0000305" key="4"/>
<evidence type="ECO:0000305" key="5">
    <source>
    </source>
</evidence>
<accession>Q84KL6</accession>
<reference key="1">
    <citation type="journal article" date="2003" name="Arch. Biochem. Biophys.">
        <title>cDNA isolation, functional expression, and characterization of (+)-alpha-pinene synthase and (-)-alpha-pinene synthase from loblolly pine (Pinus taeda): stereocontrol in pinene biosynthesis.</title>
        <authorList>
            <person name="Phillips M.A."/>
            <person name="Wildung M.R."/>
            <person name="Williams D.C."/>
            <person name="Hyatt D.C."/>
            <person name="Croteau R."/>
        </authorList>
    </citation>
    <scope>NUCLEOTIDE SEQUENCE [MRNA]</scope>
    <scope>FUNCTION</scope>
    <scope>CATALYTIC ACTIVITY</scope>
    <scope>COFACTOR</scope>
    <scope>BIOPHYSICOCHEMICAL PROPERTIES</scope>
    <scope>3D-STRUCTURE MODELING</scope>
</reference>
<proteinExistence type="evidence at protein level"/>
<organism>
    <name type="scientific">Pinus taeda</name>
    <name type="common">Loblolly pine</name>
    <dbReference type="NCBI Taxonomy" id="3352"/>
    <lineage>
        <taxon>Eukaryota</taxon>
        <taxon>Viridiplantae</taxon>
        <taxon>Streptophyta</taxon>
        <taxon>Embryophyta</taxon>
        <taxon>Tracheophyta</taxon>
        <taxon>Spermatophyta</taxon>
        <taxon>Pinopsida</taxon>
        <taxon>Pinidae</taxon>
        <taxon>Conifers I</taxon>
        <taxon>Pinales</taxon>
        <taxon>Pinaceae</taxon>
        <taxon>Pinus</taxon>
        <taxon>Pinus subgen. Pinus</taxon>
    </lineage>
</organism>